<name>NADD_NEIG1</name>
<sequence>MKKIGLFGGTFDPIHNGHFHIARAFADEIGLDAVVFLPAGGPYHKDAASASAADRLAMVELATAEDARFAVSDCDIVRESATYTFDTVQIFRRQFPSAQLWWLMGSDSLLKLHTWKKWQLLVRETNIAVAMRQGDSLHQTPRELHAWLGNALQDGSVRILSAPMHNVSSTEIRRNLSAAGVSDGIPPAAARYIRKHGLYEK</sequence>
<evidence type="ECO:0000255" key="1">
    <source>
        <dbReference type="HAMAP-Rule" id="MF_00244"/>
    </source>
</evidence>
<accession>Q5F556</accession>
<feature type="chain" id="PRO_0000181428" description="Probable nicotinate-nucleotide adenylyltransferase">
    <location>
        <begin position="1"/>
        <end position="201"/>
    </location>
</feature>
<organism>
    <name type="scientific">Neisseria gonorrhoeae (strain ATCC 700825 / FA 1090)</name>
    <dbReference type="NCBI Taxonomy" id="242231"/>
    <lineage>
        <taxon>Bacteria</taxon>
        <taxon>Pseudomonadati</taxon>
        <taxon>Pseudomonadota</taxon>
        <taxon>Betaproteobacteria</taxon>
        <taxon>Neisseriales</taxon>
        <taxon>Neisseriaceae</taxon>
        <taxon>Neisseria</taxon>
    </lineage>
</organism>
<gene>
    <name evidence="1" type="primary">nadD</name>
    <name type="ordered locus">NGO_2080</name>
</gene>
<keyword id="KW-0067">ATP-binding</keyword>
<keyword id="KW-0520">NAD</keyword>
<keyword id="KW-0547">Nucleotide-binding</keyword>
<keyword id="KW-0548">Nucleotidyltransferase</keyword>
<keyword id="KW-0662">Pyridine nucleotide biosynthesis</keyword>
<keyword id="KW-1185">Reference proteome</keyword>
<keyword id="KW-0808">Transferase</keyword>
<proteinExistence type="inferred from homology"/>
<reference key="1">
    <citation type="submission" date="2003-03" db="EMBL/GenBank/DDBJ databases">
        <title>The complete genome sequence of Neisseria gonorrhoeae.</title>
        <authorList>
            <person name="Lewis L.A."/>
            <person name="Gillaspy A.F."/>
            <person name="McLaughlin R.E."/>
            <person name="Gipson M."/>
            <person name="Ducey T.F."/>
            <person name="Ownbey T."/>
            <person name="Hartman K."/>
            <person name="Nydick C."/>
            <person name="Carson M.B."/>
            <person name="Vaughn J."/>
            <person name="Thomson C."/>
            <person name="Song L."/>
            <person name="Lin S."/>
            <person name="Yuan X."/>
            <person name="Najar F."/>
            <person name="Zhan M."/>
            <person name="Ren Q."/>
            <person name="Zhu H."/>
            <person name="Qi S."/>
            <person name="Kenton S.M."/>
            <person name="Lai H."/>
            <person name="White J.D."/>
            <person name="Clifton S."/>
            <person name="Roe B.A."/>
            <person name="Dyer D.W."/>
        </authorList>
    </citation>
    <scope>NUCLEOTIDE SEQUENCE [LARGE SCALE GENOMIC DNA]</scope>
    <source>
        <strain>ATCC 700825 / FA 1090</strain>
    </source>
</reference>
<comment type="function">
    <text evidence="1">Catalyzes the reversible adenylation of nicotinate mononucleotide (NaMN) to nicotinic acid adenine dinucleotide (NaAD).</text>
</comment>
<comment type="catalytic activity">
    <reaction evidence="1">
        <text>nicotinate beta-D-ribonucleotide + ATP + H(+) = deamido-NAD(+) + diphosphate</text>
        <dbReference type="Rhea" id="RHEA:22860"/>
        <dbReference type="ChEBI" id="CHEBI:15378"/>
        <dbReference type="ChEBI" id="CHEBI:30616"/>
        <dbReference type="ChEBI" id="CHEBI:33019"/>
        <dbReference type="ChEBI" id="CHEBI:57502"/>
        <dbReference type="ChEBI" id="CHEBI:58437"/>
        <dbReference type="EC" id="2.7.7.18"/>
    </reaction>
</comment>
<comment type="pathway">
    <text evidence="1">Cofactor biosynthesis; NAD(+) biosynthesis; deamido-NAD(+) from nicotinate D-ribonucleotide: step 1/1.</text>
</comment>
<comment type="similarity">
    <text evidence="1">Belongs to the NadD family.</text>
</comment>
<protein>
    <recommendedName>
        <fullName evidence="1">Probable nicotinate-nucleotide adenylyltransferase</fullName>
        <ecNumber evidence="1">2.7.7.18</ecNumber>
    </recommendedName>
    <alternativeName>
        <fullName evidence="1">Deamido-NAD(+) diphosphorylase</fullName>
    </alternativeName>
    <alternativeName>
        <fullName evidence="1">Deamido-NAD(+) pyrophosphorylase</fullName>
    </alternativeName>
    <alternativeName>
        <fullName evidence="1">Nicotinate mononucleotide adenylyltransferase</fullName>
        <shortName evidence="1">NaMN adenylyltransferase</shortName>
    </alternativeName>
</protein>
<dbReference type="EC" id="2.7.7.18" evidence="1"/>
<dbReference type="EMBL" id="AE004969">
    <property type="protein sequence ID" value="AAW90681.1"/>
    <property type="molecule type" value="Genomic_DNA"/>
</dbReference>
<dbReference type="RefSeq" id="WP_003687035.1">
    <property type="nucleotide sequence ID" value="NC_002946.2"/>
</dbReference>
<dbReference type="RefSeq" id="YP_209093.1">
    <property type="nucleotide sequence ID" value="NC_002946.2"/>
</dbReference>
<dbReference type="SMR" id="Q5F556"/>
<dbReference type="STRING" id="242231.NGO_2080"/>
<dbReference type="GeneID" id="66754406"/>
<dbReference type="KEGG" id="ngo:NGO_2080"/>
<dbReference type="PATRIC" id="fig|242231.10.peg.2519"/>
<dbReference type="HOGENOM" id="CLU_069765_0_0_4"/>
<dbReference type="UniPathway" id="UPA00253">
    <property type="reaction ID" value="UER00332"/>
</dbReference>
<dbReference type="Proteomes" id="UP000000535">
    <property type="component" value="Chromosome"/>
</dbReference>
<dbReference type="GO" id="GO:0005524">
    <property type="term" value="F:ATP binding"/>
    <property type="evidence" value="ECO:0007669"/>
    <property type="project" value="UniProtKB-KW"/>
</dbReference>
<dbReference type="GO" id="GO:0004515">
    <property type="term" value="F:nicotinate-nucleotide adenylyltransferase activity"/>
    <property type="evidence" value="ECO:0007669"/>
    <property type="project" value="UniProtKB-UniRule"/>
</dbReference>
<dbReference type="GO" id="GO:0009435">
    <property type="term" value="P:NAD biosynthetic process"/>
    <property type="evidence" value="ECO:0007669"/>
    <property type="project" value="UniProtKB-UniRule"/>
</dbReference>
<dbReference type="CDD" id="cd02165">
    <property type="entry name" value="NMNAT"/>
    <property type="match status" value="1"/>
</dbReference>
<dbReference type="FunFam" id="3.40.50.620:FF:000254">
    <property type="entry name" value="Probable nicotinate-nucleotide adenylyltransferase"/>
    <property type="match status" value="1"/>
</dbReference>
<dbReference type="Gene3D" id="3.40.50.620">
    <property type="entry name" value="HUPs"/>
    <property type="match status" value="1"/>
</dbReference>
<dbReference type="HAMAP" id="MF_00244">
    <property type="entry name" value="NaMN_adenylyltr"/>
    <property type="match status" value="1"/>
</dbReference>
<dbReference type="InterPro" id="IPR004821">
    <property type="entry name" value="Cyt_trans-like"/>
</dbReference>
<dbReference type="InterPro" id="IPR005248">
    <property type="entry name" value="NadD/NMNAT"/>
</dbReference>
<dbReference type="InterPro" id="IPR014729">
    <property type="entry name" value="Rossmann-like_a/b/a_fold"/>
</dbReference>
<dbReference type="NCBIfam" id="TIGR00125">
    <property type="entry name" value="cyt_tran_rel"/>
    <property type="match status" value="1"/>
</dbReference>
<dbReference type="NCBIfam" id="TIGR00482">
    <property type="entry name" value="nicotinate (nicotinamide) nucleotide adenylyltransferase"/>
    <property type="match status" value="1"/>
</dbReference>
<dbReference type="NCBIfam" id="NF000840">
    <property type="entry name" value="PRK00071.1-3"/>
    <property type="match status" value="1"/>
</dbReference>
<dbReference type="PANTHER" id="PTHR39321">
    <property type="entry name" value="NICOTINATE-NUCLEOTIDE ADENYLYLTRANSFERASE-RELATED"/>
    <property type="match status" value="1"/>
</dbReference>
<dbReference type="PANTHER" id="PTHR39321:SF3">
    <property type="entry name" value="PHOSPHOPANTETHEINE ADENYLYLTRANSFERASE"/>
    <property type="match status" value="1"/>
</dbReference>
<dbReference type="Pfam" id="PF01467">
    <property type="entry name" value="CTP_transf_like"/>
    <property type="match status" value="1"/>
</dbReference>
<dbReference type="SUPFAM" id="SSF52374">
    <property type="entry name" value="Nucleotidylyl transferase"/>
    <property type="match status" value="1"/>
</dbReference>